<proteinExistence type="inferred from homology"/>
<evidence type="ECO:0000255" key="1">
    <source>
        <dbReference type="HAMAP-Rule" id="MF_00632"/>
    </source>
</evidence>
<accession>A3MHG5</accession>
<organism>
    <name type="scientific">Burkholderia mallei (strain NCTC 10247)</name>
    <dbReference type="NCBI Taxonomy" id="320389"/>
    <lineage>
        <taxon>Bacteria</taxon>
        <taxon>Pseudomonadati</taxon>
        <taxon>Pseudomonadota</taxon>
        <taxon>Betaproteobacteria</taxon>
        <taxon>Burkholderiales</taxon>
        <taxon>Burkholderiaceae</taxon>
        <taxon>Burkholderia</taxon>
        <taxon>pseudomallei group</taxon>
    </lineage>
</organism>
<name>Y2622_BURM7</name>
<sequence>MPSFDVVSEANMIEVKNAVEQSNKEISTRFDFKGSDARVEQKERELTLYADDDFKLGQVKDVLIGKMAKRNVDVRFLDYGKIEKIGGDKVKQVVTIKKGVSGDLAKKVVRIVKDSKIKVQASIQGDAVRVSGAKRDDLQSTIALLRKEVTDTPLDFNNFRD</sequence>
<keyword id="KW-0547">Nucleotide-binding</keyword>
<comment type="function">
    <text evidence="1">Nucleotide-binding protein.</text>
</comment>
<comment type="similarity">
    <text evidence="1">Belongs to the YajQ family.</text>
</comment>
<dbReference type="EMBL" id="CP000548">
    <property type="protein sequence ID" value="ABO04166.1"/>
    <property type="molecule type" value="Genomic_DNA"/>
</dbReference>
<dbReference type="RefSeq" id="WP_004189237.1">
    <property type="nucleotide sequence ID" value="NZ_CP007802.1"/>
</dbReference>
<dbReference type="SMR" id="A3MHG5"/>
<dbReference type="KEGG" id="bmaz:BM44_2856"/>
<dbReference type="KEGG" id="bmn:BMA10247_0122"/>
<dbReference type="PATRIC" id="fig|320389.8.peg.3224"/>
<dbReference type="GO" id="GO:0005829">
    <property type="term" value="C:cytosol"/>
    <property type="evidence" value="ECO:0007669"/>
    <property type="project" value="TreeGrafter"/>
</dbReference>
<dbReference type="GO" id="GO:0000166">
    <property type="term" value="F:nucleotide binding"/>
    <property type="evidence" value="ECO:0007669"/>
    <property type="project" value="TreeGrafter"/>
</dbReference>
<dbReference type="CDD" id="cd11740">
    <property type="entry name" value="YajQ_like"/>
    <property type="match status" value="1"/>
</dbReference>
<dbReference type="Gene3D" id="3.30.70.860">
    <property type="match status" value="1"/>
</dbReference>
<dbReference type="Gene3D" id="3.30.70.990">
    <property type="entry name" value="YajQ-like, domain 2"/>
    <property type="match status" value="1"/>
</dbReference>
<dbReference type="HAMAP" id="MF_00632">
    <property type="entry name" value="YajQ"/>
    <property type="match status" value="1"/>
</dbReference>
<dbReference type="InterPro" id="IPR007551">
    <property type="entry name" value="DUF520"/>
</dbReference>
<dbReference type="InterPro" id="IPR035571">
    <property type="entry name" value="UPF0234-like_C"/>
</dbReference>
<dbReference type="InterPro" id="IPR035570">
    <property type="entry name" value="UPF0234_N"/>
</dbReference>
<dbReference type="InterPro" id="IPR036183">
    <property type="entry name" value="YajQ-like_sf"/>
</dbReference>
<dbReference type="NCBIfam" id="NF003819">
    <property type="entry name" value="PRK05412.1"/>
    <property type="match status" value="1"/>
</dbReference>
<dbReference type="PANTHER" id="PTHR30476">
    <property type="entry name" value="UPF0234 PROTEIN YAJQ"/>
    <property type="match status" value="1"/>
</dbReference>
<dbReference type="PANTHER" id="PTHR30476:SF0">
    <property type="entry name" value="UPF0234 PROTEIN YAJQ"/>
    <property type="match status" value="1"/>
</dbReference>
<dbReference type="Pfam" id="PF04461">
    <property type="entry name" value="DUF520"/>
    <property type="match status" value="1"/>
</dbReference>
<dbReference type="SUPFAM" id="SSF89963">
    <property type="entry name" value="YajQ-like"/>
    <property type="match status" value="2"/>
</dbReference>
<gene>
    <name type="ordered locus">BMA10247_0122</name>
</gene>
<reference key="1">
    <citation type="journal article" date="2010" name="Genome Biol. Evol.">
        <title>Continuing evolution of Burkholderia mallei through genome reduction and large-scale rearrangements.</title>
        <authorList>
            <person name="Losada L."/>
            <person name="Ronning C.M."/>
            <person name="DeShazer D."/>
            <person name="Woods D."/>
            <person name="Fedorova N."/>
            <person name="Kim H.S."/>
            <person name="Shabalina S.A."/>
            <person name="Pearson T.R."/>
            <person name="Brinkac L."/>
            <person name="Tan P."/>
            <person name="Nandi T."/>
            <person name="Crabtree J."/>
            <person name="Badger J."/>
            <person name="Beckstrom-Sternberg S."/>
            <person name="Saqib M."/>
            <person name="Schutzer S.E."/>
            <person name="Keim P."/>
            <person name="Nierman W.C."/>
        </authorList>
    </citation>
    <scope>NUCLEOTIDE SEQUENCE [LARGE SCALE GENOMIC DNA]</scope>
    <source>
        <strain>NCTC 10247</strain>
    </source>
</reference>
<protein>
    <recommendedName>
        <fullName evidence="1">Nucleotide-binding protein BMA10247_0122</fullName>
    </recommendedName>
</protein>
<feature type="chain" id="PRO_1000051718" description="Nucleotide-binding protein BMA10247_0122">
    <location>
        <begin position="1"/>
        <end position="161"/>
    </location>
</feature>